<reference key="1">
    <citation type="journal article" date="1994" name="Comp. Biochem. Physiol.">
        <title>The primary structure of an endocuticular protein from two locus species, Locusta migratoria and Schistocerca gregaria, determined by a combination of mass spectrometry and automatic Edman degradation.</title>
        <authorList>
            <person name="Jespersen S."/>
            <person name="Hoejrup P."/>
            <person name="Andersen S.O."/>
            <person name="Roepstorff P."/>
        </authorList>
    </citation>
    <scope>PROTEIN SEQUENCE</scope>
    <scope>PYROGLUTAMATE FORMATION AT GLN-1</scope>
    <scope>MASS SPECTROMETRY</scope>
    <source>
        <tissue>Cuticle</tissue>
    </source>
</reference>
<protein>
    <recommendedName>
        <fullName>Endocuticle structural glycoprotein SgAbd-5</fullName>
    </recommendedName>
</protein>
<dbReference type="EnsemblMetazoa" id="XM_049983339.1">
    <property type="protein sequence ID" value="XP_049839296.1"/>
    <property type="gene ID" value="LOC126284421"/>
</dbReference>
<dbReference type="OrthoDB" id="7255276at2759"/>
<dbReference type="GO" id="GO:0062129">
    <property type="term" value="C:chitin-based extracellular matrix"/>
    <property type="evidence" value="ECO:0007669"/>
    <property type="project" value="TreeGrafter"/>
</dbReference>
<dbReference type="GO" id="GO:0008010">
    <property type="term" value="F:structural constituent of chitin-based larval cuticle"/>
    <property type="evidence" value="ECO:0007669"/>
    <property type="project" value="TreeGrafter"/>
</dbReference>
<dbReference type="InterPro" id="IPR031311">
    <property type="entry name" value="CHIT_BIND_RR_consensus"/>
</dbReference>
<dbReference type="InterPro" id="IPR050468">
    <property type="entry name" value="Cuticle_Struct_Prot"/>
</dbReference>
<dbReference type="InterPro" id="IPR000618">
    <property type="entry name" value="Insect_cuticle"/>
</dbReference>
<dbReference type="PANTHER" id="PTHR10380:SF218">
    <property type="entry name" value="ADULT CUTICLE PROTEIN 65AA-RELATED"/>
    <property type="match status" value="1"/>
</dbReference>
<dbReference type="PANTHER" id="PTHR10380">
    <property type="entry name" value="CUTICLE PROTEIN"/>
    <property type="match status" value="1"/>
</dbReference>
<dbReference type="Pfam" id="PF00379">
    <property type="entry name" value="Chitin_bind_4"/>
    <property type="match status" value="1"/>
</dbReference>
<dbReference type="PRINTS" id="PR00947">
    <property type="entry name" value="CUTICLE"/>
</dbReference>
<dbReference type="PROSITE" id="PS00233">
    <property type="entry name" value="CHIT_BIND_RR_1"/>
    <property type="match status" value="1"/>
</dbReference>
<dbReference type="PROSITE" id="PS51155">
    <property type="entry name" value="CHIT_BIND_RR_2"/>
    <property type="match status" value="1"/>
</dbReference>
<organism>
    <name type="scientific">Schistocerca gregaria</name>
    <name type="common">Desert locust</name>
    <name type="synonym">Gryllus gregarius</name>
    <dbReference type="NCBI Taxonomy" id="7010"/>
    <lineage>
        <taxon>Eukaryota</taxon>
        <taxon>Metazoa</taxon>
        <taxon>Ecdysozoa</taxon>
        <taxon>Arthropoda</taxon>
        <taxon>Hexapoda</taxon>
        <taxon>Insecta</taxon>
        <taxon>Pterygota</taxon>
        <taxon>Neoptera</taxon>
        <taxon>Polyneoptera</taxon>
        <taxon>Orthoptera</taxon>
        <taxon>Caelifera</taxon>
        <taxon>Acrididea</taxon>
        <taxon>Acridomorpha</taxon>
        <taxon>Acridoidea</taxon>
        <taxon>Acrididae</taxon>
        <taxon>Cyrtacanthacridinae</taxon>
        <taxon>Schistocerca</taxon>
    </lineage>
</organism>
<evidence type="ECO:0000255" key="1">
    <source>
        <dbReference type="PROSITE-ProRule" id="PRU00497"/>
    </source>
</evidence>
<evidence type="ECO:0000269" key="2">
    <source>
    </source>
</evidence>
<keyword id="KW-0193">Cuticle</keyword>
<keyword id="KW-0903">Direct protein sequencing</keyword>
<keyword id="KW-0873">Pyrrolidone carboxylic acid</keyword>
<comment type="function">
    <text>Component of the soft endocuticle of desert locust.</text>
</comment>
<comment type="mass spectrometry" mass="8897.8" error="2.0" method="Electrospray" evidence="2"/>
<feature type="chain" id="PRO_0000196122" description="Endocuticle structural glycoprotein SgAbd-5">
    <location>
        <begin position="1"/>
        <end position="82"/>
    </location>
</feature>
<feature type="domain" description="Chitin-binding type R&amp;R" evidence="1">
    <location>
        <begin position="18"/>
        <end position="82"/>
    </location>
</feature>
<feature type="modified residue" description="Pyrrolidone carboxylic acid" evidence="2">
    <location>
        <position position="1"/>
    </location>
</feature>
<accession>P56562</accession>
<sequence length="82" mass="8915">QSGKDATIVELTNDNDGLGQYNFAYRTSDGIARQEQGALKNAGSENEAIEVQGSYTYKGVDGKDYTVTFVANENGYQPRVQS</sequence>
<name>CUD5_SCHGR</name>
<proteinExistence type="evidence at protein level"/>